<proteinExistence type="evidence at transcript level"/>
<dbReference type="EC" id="3.4.21.-"/>
<dbReference type="EMBL" id="AB008911">
    <property type="protein sequence ID" value="BAA26133.1"/>
    <property type="molecule type" value="mRNA"/>
</dbReference>
<dbReference type="EMBL" id="AC106841">
    <property type="status" value="NOT_ANNOTATED_CDS"/>
    <property type="molecule type" value="Genomic_DNA"/>
</dbReference>
<dbReference type="EMBL" id="BC145989">
    <property type="protein sequence ID" value="AAI45990.1"/>
    <property type="molecule type" value="mRNA"/>
</dbReference>
<dbReference type="CCDS" id="CCDS14870.1"/>
<dbReference type="PIR" id="JE0105">
    <property type="entry name" value="JE0105"/>
</dbReference>
<dbReference type="RefSeq" id="NP_033382.2">
    <property type="nucleotide sequence ID" value="NM_009356.2"/>
</dbReference>
<dbReference type="SMR" id="A6H6T1"/>
<dbReference type="BioGRID" id="204122">
    <property type="interactions" value="4"/>
</dbReference>
<dbReference type="FunCoup" id="A6H6T1">
    <property type="interactions" value="65"/>
</dbReference>
<dbReference type="STRING" id="10090.ENSMUSP00000045118"/>
<dbReference type="MEROPS" id="S01.045"/>
<dbReference type="GlyCosmos" id="A6H6T1">
    <property type="glycosylation" value="1 site, No reported glycans"/>
</dbReference>
<dbReference type="GlyGen" id="A6H6T1">
    <property type="glycosylation" value="1 site"/>
</dbReference>
<dbReference type="PaxDb" id="10090-ENSMUSP00000045118"/>
<dbReference type="ProteomicsDB" id="291904"/>
<dbReference type="DNASU" id="21756"/>
<dbReference type="Ensembl" id="ENSMUST00000047840.9">
    <property type="protein sequence ID" value="ENSMUSP00000045118.8"/>
    <property type="gene ID" value="ENSMUSG00000037529.14"/>
</dbReference>
<dbReference type="GeneID" id="21756"/>
<dbReference type="KEGG" id="mmu:21756"/>
<dbReference type="UCSC" id="uc007aox.2">
    <property type="organism name" value="mouse"/>
</dbReference>
<dbReference type="AGR" id="MGI:1270857"/>
<dbReference type="CTD" id="21756"/>
<dbReference type="MGI" id="MGI:1270857">
    <property type="gene designation" value="Prss40"/>
</dbReference>
<dbReference type="VEuPathDB" id="HostDB:ENSMUSG00000037529"/>
<dbReference type="eggNOG" id="KOG3627">
    <property type="taxonomic scope" value="Eukaryota"/>
</dbReference>
<dbReference type="GeneTree" id="ENSGT00940000157345"/>
<dbReference type="HOGENOM" id="CLU_006842_0_4_1"/>
<dbReference type="InParanoid" id="A6H6T1"/>
<dbReference type="OMA" id="SWYVVGL"/>
<dbReference type="OrthoDB" id="546450at2759"/>
<dbReference type="PhylomeDB" id="A6H6T1"/>
<dbReference type="TreeFam" id="TF351676"/>
<dbReference type="BioGRID-ORCS" id="21756">
    <property type="hits" value="3 hits in 76 CRISPR screens"/>
</dbReference>
<dbReference type="PRO" id="PR:A6H6T1"/>
<dbReference type="Proteomes" id="UP000000589">
    <property type="component" value="Chromosome 1"/>
</dbReference>
<dbReference type="RNAct" id="A6H6T1">
    <property type="molecule type" value="protein"/>
</dbReference>
<dbReference type="Bgee" id="ENSMUSG00000037529">
    <property type="expression patterns" value="Expressed in spermatid and 14 other cell types or tissues"/>
</dbReference>
<dbReference type="ExpressionAtlas" id="A6H6T1">
    <property type="expression patterns" value="baseline and differential"/>
</dbReference>
<dbReference type="GO" id="GO:0001669">
    <property type="term" value="C:acrosomal vesicle"/>
    <property type="evidence" value="ECO:0007669"/>
    <property type="project" value="UniProtKB-SubCell"/>
</dbReference>
<dbReference type="GO" id="GO:0005576">
    <property type="term" value="C:extracellular region"/>
    <property type="evidence" value="ECO:0007669"/>
    <property type="project" value="UniProtKB-SubCell"/>
</dbReference>
<dbReference type="GO" id="GO:0004252">
    <property type="term" value="F:serine-type endopeptidase activity"/>
    <property type="evidence" value="ECO:0007669"/>
    <property type="project" value="InterPro"/>
</dbReference>
<dbReference type="GO" id="GO:0006508">
    <property type="term" value="P:proteolysis"/>
    <property type="evidence" value="ECO:0007669"/>
    <property type="project" value="UniProtKB-KW"/>
</dbReference>
<dbReference type="CDD" id="cd00190">
    <property type="entry name" value="Tryp_SPc"/>
    <property type="match status" value="1"/>
</dbReference>
<dbReference type="FunFam" id="2.40.10.10:FF:000039">
    <property type="entry name" value="Brain-specific serine protease 4"/>
    <property type="match status" value="1"/>
</dbReference>
<dbReference type="Gene3D" id="2.40.10.10">
    <property type="entry name" value="Trypsin-like serine proteases"/>
    <property type="match status" value="1"/>
</dbReference>
<dbReference type="InterPro" id="IPR009003">
    <property type="entry name" value="Peptidase_S1_PA"/>
</dbReference>
<dbReference type="InterPro" id="IPR043504">
    <property type="entry name" value="Peptidase_S1_PA_chymotrypsin"/>
</dbReference>
<dbReference type="InterPro" id="IPR001314">
    <property type="entry name" value="Peptidase_S1A"/>
</dbReference>
<dbReference type="InterPro" id="IPR001254">
    <property type="entry name" value="Trypsin_dom"/>
</dbReference>
<dbReference type="InterPro" id="IPR018114">
    <property type="entry name" value="TRYPSIN_HIS"/>
</dbReference>
<dbReference type="InterPro" id="IPR033116">
    <property type="entry name" value="TRYPSIN_SER"/>
</dbReference>
<dbReference type="PANTHER" id="PTHR24253:SF42">
    <property type="entry name" value="PROTEASE, SERINE 47"/>
    <property type="match status" value="1"/>
</dbReference>
<dbReference type="PANTHER" id="PTHR24253">
    <property type="entry name" value="TRANSMEMBRANE PROTEASE SERINE"/>
    <property type="match status" value="1"/>
</dbReference>
<dbReference type="Pfam" id="PF00089">
    <property type="entry name" value="Trypsin"/>
    <property type="match status" value="1"/>
</dbReference>
<dbReference type="PRINTS" id="PR00722">
    <property type="entry name" value="CHYMOTRYPSIN"/>
</dbReference>
<dbReference type="SMART" id="SM00020">
    <property type="entry name" value="Tryp_SPc"/>
    <property type="match status" value="1"/>
</dbReference>
<dbReference type="SUPFAM" id="SSF50494">
    <property type="entry name" value="Trypsin-like serine proteases"/>
    <property type="match status" value="1"/>
</dbReference>
<dbReference type="PROSITE" id="PS50240">
    <property type="entry name" value="TRYPSIN_DOM"/>
    <property type="match status" value="1"/>
</dbReference>
<dbReference type="PROSITE" id="PS00134">
    <property type="entry name" value="TRYPSIN_HIS"/>
    <property type="match status" value="1"/>
</dbReference>
<dbReference type="PROSITE" id="PS00135">
    <property type="entry name" value="TRYPSIN_SER"/>
    <property type="match status" value="1"/>
</dbReference>
<sequence length="365" mass="40146">MCGIRAKKSGLGGYGAGLLAALLGVSFLSQHAQTAEHVTNAANNTTIQIMKSTLSLSEVCGKTKFQGKIYGGQIAGAERWPWQASLRLYGRHICGAVLIDKNWVLSAAHCFQRSQEPSDYHVMLGYTDLNSPTRYSRTMSVQKVIVHKDYNRFHTQGSDIVLLQLRSSVEYSSHILPACVPEENIKIPKEKACWASGWGYLREDVRIPLPNELYEAELIIMSNDQCKGFFPPPVPGSGRSYYIYDDMVCAADYDMSKSICAGDSGGPLVCLLEGSWYVVGLTSWSSTCEEPIVSPSVFARVSYFDKWIKDNKKSSSNSKPGESPHHPGSPENENPEGDNKNQGAVIKPTVCTALLLSQILLQQLI</sequence>
<keyword id="KW-0968">Cytoplasmic vesicle</keyword>
<keyword id="KW-1015">Disulfide bond</keyword>
<keyword id="KW-0325">Glycoprotein</keyword>
<keyword id="KW-0378">Hydrolase</keyword>
<keyword id="KW-0645">Protease</keyword>
<keyword id="KW-1185">Reference proteome</keyword>
<keyword id="KW-0964">Secreted</keyword>
<keyword id="KW-0720">Serine protease</keyword>
<keyword id="KW-0732">Signal</keyword>
<gene>
    <name type="primary">Prss40</name>
    <name type="synonym">Tesp2</name>
</gene>
<evidence type="ECO:0000250" key="1"/>
<evidence type="ECO:0000255" key="2"/>
<evidence type="ECO:0000255" key="3">
    <source>
        <dbReference type="PROSITE-ProRule" id="PRU00274"/>
    </source>
</evidence>
<evidence type="ECO:0000256" key="4">
    <source>
        <dbReference type="SAM" id="MobiDB-lite"/>
    </source>
</evidence>
<evidence type="ECO:0000269" key="5">
    <source>
    </source>
</evidence>
<evidence type="ECO:0000305" key="6"/>
<organism>
    <name type="scientific">Mus musculus</name>
    <name type="common">Mouse</name>
    <dbReference type="NCBI Taxonomy" id="10090"/>
    <lineage>
        <taxon>Eukaryota</taxon>
        <taxon>Metazoa</taxon>
        <taxon>Chordata</taxon>
        <taxon>Craniata</taxon>
        <taxon>Vertebrata</taxon>
        <taxon>Euteleostomi</taxon>
        <taxon>Mammalia</taxon>
        <taxon>Eutheria</taxon>
        <taxon>Euarchontoglires</taxon>
        <taxon>Glires</taxon>
        <taxon>Rodentia</taxon>
        <taxon>Myomorpha</taxon>
        <taxon>Muroidea</taxon>
        <taxon>Muridae</taxon>
        <taxon>Murinae</taxon>
        <taxon>Mus</taxon>
        <taxon>Mus</taxon>
    </lineage>
</organism>
<comment type="function">
    <text evidence="5">May play an important role in the sperm/egg interaction; released during the acrosome reaction.</text>
</comment>
<comment type="subcellular location">
    <subcellularLocation>
        <location evidence="5">Cytoplasmic vesicle</location>
        <location evidence="5">Secretory vesicle</location>
        <location evidence="5">Acrosome</location>
    </subcellularLocation>
    <subcellularLocation>
        <location evidence="5">Secreted</location>
    </subcellularLocation>
</comment>
<comment type="tissue specificity">
    <text evidence="5">Expressed in testis. More specifically, abundantly expressed in the haploid round spermatid.</text>
</comment>
<comment type="miscellaneous">
    <text>There appears to be no human ortholog of this protein.</text>
</comment>
<comment type="similarity">
    <text evidence="3">Belongs to the peptidase S1 family.</text>
</comment>
<reference key="1">
    <citation type="journal article" date="1998" name="Biochem. Biophys. Res. Commun.">
        <title>Two novel testicular serine proteases, TESP1 and TESP2, are present in the mouse sperm acrosome.</title>
        <authorList>
            <person name="Kohno N."/>
            <person name="Yamagata K."/>
            <person name="Yamada S."/>
            <person name="Kashiwabara S."/>
            <person name="Sakai Y."/>
            <person name="Baba T."/>
        </authorList>
    </citation>
    <scope>NUCLEOTIDE SEQUENCE [MRNA]</scope>
    <scope>FUNCTION</scope>
    <scope>TISSUE SPECIFICITY</scope>
    <scope>SUBCELLULAR LOCATION</scope>
    <source>
        <tissue>Testis</tissue>
    </source>
</reference>
<reference key="2">
    <citation type="journal article" date="2009" name="PLoS Biol.">
        <title>Lineage-specific biology revealed by a finished genome assembly of the mouse.</title>
        <authorList>
            <person name="Church D.M."/>
            <person name="Goodstadt L."/>
            <person name="Hillier L.W."/>
            <person name="Zody M.C."/>
            <person name="Goldstein S."/>
            <person name="She X."/>
            <person name="Bult C.J."/>
            <person name="Agarwala R."/>
            <person name="Cherry J.L."/>
            <person name="DiCuccio M."/>
            <person name="Hlavina W."/>
            <person name="Kapustin Y."/>
            <person name="Meric P."/>
            <person name="Maglott D."/>
            <person name="Birtle Z."/>
            <person name="Marques A.C."/>
            <person name="Graves T."/>
            <person name="Zhou S."/>
            <person name="Teague B."/>
            <person name="Potamousis K."/>
            <person name="Churas C."/>
            <person name="Place M."/>
            <person name="Herschleb J."/>
            <person name="Runnheim R."/>
            <person name="Forrest D."/>
            <person name="Amos-Landgraf J."/>
            <person name="Schwartz D.C."/>
            <person name="Cheng Z."/>
            <person name="Lindblad-Toh K."/>
            <person name="Eichler E.E."/>
            <person name="Ponting C.P."/>
        </authorList>
    </citation>
    <scope>NUCLEOTIDE SEQUENCE [LARGE SCALE GENOMIC DNA]</scope>
    <source>
        <strain>C57BL/6J</strain>
    </source>
</reference>
<reference key="3">
    <citation type="journal article" date="2004" name="Genome Res.">
        <title>The status, quality, and expansion of the NIH full-length cDNA project: the Mammalian Gene Collection (MGC).</title>
        <authorList>
            <consortium name="The MGC Project Team"/>
        </authorList>
    </citation>
    <scope>NUCLEOTIDE SEQUENCE [LARGE SCALE MRNA]</scope>
    <source>
        <tissue>Brain</tissue>
    </source>
</reference>
<name>PRS40_MOUSE</name>
<protein>
    <recommendedName>
        <fullName>Serine protease 40</fullName>
        <ecNumber>3.4.21.-</ecNumber>
    </recommendedName>
    <alternativeName>
        <fullName>Testicular serine protease 2</fullName>
    </alternativeName>
</protein>
<feature type="signal peptide" evidence="2">
    <location>
        <begin position="1"/>
        <end position="34"/>
    </location>
</feature>
<feature type="chain" id="PRO_0000344982" description="Serine protease 40">
    <location>
        <begin position="35"/>
        <end position="365"/>
    </location>
</feature>
<feature type="domain" description="Peptidase S1" evidence="3">
    <location>
        <begin position="69"/>
        <end position="313"/>
    </location>
</feature>
<feature type="region of interest" description="Disordered" evidence="4">
    <location>
        <begin position="312"/>
        <end position="343"/>
    </location>
</feature>
<feature type="active site" description="Charge relay system" evidence="1">
    <location>
        <position position="109"/>
    </location>
</feature>
<feature type="active site" description="Charge relay system" evidence="1">
    <location>
        <position position="159"/>
    </location>
</feature>
<feature type="active site" description="Charge relay system" evidence="1">
    <location>
        <position position="264"/>
    </location>
</feature>
<feature type="glycosylation site" description="N-linked (GlcNAc...) asparagine" evidence="2">
    <location>
        <position position="44"/>
    </location>
</feature>
<feature type="disulfide bond" evidence="3">
    <location>
        <begin position="94"/>
        <end position="110"/>
    </location>
</feature>
<feature type="disulfide bond" evidence="3">
    <location>
        <begin position="193"/>
        <end position="270"/>
    </location>
</feature>
<feature type="disulfide bond" evidence="3">
    <location>
        <begin position="226"/>
        <end position="249"/>
    </location>
</feature>
<feature type="disulfide bond" evidence="3">
    <location>
        <begin position="260"/>
        <end position="288"/>
    </location>
</feature>
<feature type="sequence conflict" description="In Ref. 1; BAA26133." evidence="6" ref="1">
    <original>I</original>
    <variation>V</variation>
    <location>
        <position position="4"/>
    </location>
</feature>
<feature type="sequence conflict" description="In Ref. 1; BAA26133." evidence="6" ref="1">
    <original>G</original>
    <variation>S</variation>
    <location>
        <position position="12"/>
    </location>
</feature>
<feature type="sequence conflict" description="In Ref. 1; BAA26133." evidence="6" ref="1">
    <original>H</original>
    <variation>PTN</variation>
    <location>
        <position position="37"/>
    </location>
</feature>
<feature type="sequence conflict" description="In Ref. 1; BAA26133 and 3; AAI45990." evidence="6" ref="1 3">
    <original>S</original>
    <variation>G</variation>
    <location>
        <position position="106"/>
    </location>
</feature>
<feature type="sequence conflict" description="In Ref. 1; BAA26133." evidence="6" ref="1">
    <original>G</original>
    <variation>S</variation>
    <location>
        <position position="238"/>
    </location>
</feature>
<feature type="sequence conflict" description="In Ref. 1; BAA26133." evidence="6" ref="1">
    <original>D</original>
    <variation>N</variation>
    <location>
        <position position="338"/>
    </location>
</feature>
<feature type="sequence conflict" description="In Ref. 1; BAA26133." evidence="6" ref="1">
    <original>A</original>
    <variation>T</variation>
    <location>
        <position position="344"/>
    </location>
</feature>
<feature type="sequence conflict" description="In Ref. 1; BAA26133." evidence="6" ref="1">
    <location>
        <position position="349"/>
    </location>
</feature>
<feature type="sequence conflict" description="In Ref. 1; BAA26133." evidence="6" ref="1">
    <original>I</original>
    <variation>T</variation>
    <location>
        <position position="359"/>
    </location>
</feature>
<accession>A6H6T1</accession>
<accession>E9QL09</accession>
<accession>O70170</accession>